<proteinExistence type="inferred from homology"/>
<feature type="chain" id="PRO_0000105798" description="Uncharacterized HTH-type transcriptional regulator HI_1364">
    <location>
        <begin position="1"/>
        <end position="288"/>
    </location>
</feature>
<feature type="domain" description="HTH lysR-type" evidence="1">
    <location>
        <begin position="1"/>
        <end position="59"/>
    </location>
</feature>
<feature type="DNA-binding region" description="H-T-H motif" evidence="1">
    <location>
        <begin position="19"/>
        <end position="38"/>
    </location>
</feature>
<feature type="sequence conflict" description="In Ref. 1." evidence="2" ref="1">
    <original>VTGISLNF</original>
    <variation>RAFIEFLSGLGLCSEIWENHEDNI</variation>
    <location>
        <begin position="281"/>
        <end position="288"/>
    </location>
</feature>
<reference key="1">
    <citation type="journal article" date="1996" name="Gene">
        <title>Characterization of the Haemophilus influenzae topA locus: DNA topoisomerase I is required for genetic competence.</title>
        <authorList>
            <person name="Chandler M.S."/>
            <person name="Smith R.A."/>
        </authorList>
    </citation>
    <scope>NUCLEOTIDE SEQUENCE [GENOMIC DNA]</scope>
    <source>
        <strain>ATCC 51907 / DSM 11121 / KW20 / Rd</strain>
    </source>
</reference>
<reference key="2">
    <citation type="journal article" date="1995" name="Science">
        <title>Whole-genome random sequencing and assembly of Haemophilus influenzae Rd.</title>
        <authorList>
            <person name="Fleischmann R.D."/>
            <person name="Adams M.D."/>
            <person name="White O."/>
            <person name="Clayton R.A."/>
            <person name="Kirkness E.F."/>
            <person name="Kerlavage A.R."/>
            <person name="Bult C.J."/>
            <person name="Tomb J.-F."/>
            <person name="Dougherty B.A."/>
            <person name="Merrick J.M."/>
            <person name="McKenney K."/>
            <person name="Sutton G.G."/>
            <person name="FitzHugh W."/>
            <person name="Fields C.A."/>
            <person name="Gocayne J.D."/>
            <person name="Scott J.D."/>
            <person name="Shirley R."/>
            <person name="Liu L.-I."/>
            <person name="Glodek A."/>
            <person name="Kelley J.M."/>
            <person name="Weidman J.F."/>
            <person name="Phillips C.A."/>
            <person name="Spriggs T."/>
            <person name="Hedblom E."/>
            <person name="Cotton M.D."/>
            <person name="Utterback T.R."/>
            <person name="Hanna M.C."/>
            <person name="Nguyen D.T."/>
            <person name="Saudek D.M."/>
            <person name="Brandon R.C."/>
            <person name="Fine L.D."/>
            <person name="Fritchman J.L."/>
            <person name="Fuhrmann J.L."/>
            <person name="Geoghagen N.S.M."/>
            <person name="Gnehm C.L."/>
            <person name="McDonald L.A."/>
            <person name="Small K.V."/>
            <person name="Fraser C.M."/>
            <person name="Smith H.O."/>
            <person name="Venter J.C."/>
        </authorList>
    </citation>
    <scope>NUCLEOTIDE SEQUENCE [LARGE SCALE GENOMIC DNA]</scope>
    <source>
        <strain>ATCC 51907 / DSM 11121 / KW20 / Rd</strain>
    </source>
</reference>
<protein>
    <recommendedName>
        <fullName>Uncharacterized HTH-type transcriptional regulator HI_1364</fullName>
    </recommendedName>
    <alternativeName>
        <fullName>ORF2</fullName>
    </alternativeName>
</protein>
<comment type="similarity">
    <text evidence="2">Belongs to the LysR transcriptional regulatory family.</text>
</comment>
<accession>P43011</accession>
<dbReference type="EMBL" id="U20964">
    <property type="protein sequence ID" value="AAC43726.1"/>
    <property type="molecule type" value="Genomic_DNA"/>
</dbReference>
<dbReference type="EMBL" id="L42023">
    <property type="protein sequence ID" value="AAC23011.1"/>
    <property type="molecule type" value="Genomic_DNA"/>
</dbReference>
<dbReference type="PIR" id="D64171">
    <property type="entry name" value="D64171"/>
</dbReference>
<dbReference type="RefSeq" id="NP_439515.1">
    <property type="nucleotide sequence ID" value="NC_000907.1"/>
</dbReference>
<dbReference type="SMR" id="P43011"/>
<dbReference type="STRING" id="71421.HI_1364"/>
<dbReference type="EnsemblBacteria" id="AAC23011">
    <property type="protein sequence ID" value="AAC23011"/>
    <property type="gene ID" value="HI_1364"/>
</dbReference>
<dbReference type="KEGG" id="hin:HI_1364"/>
<dbReference type="PATRIC" id="fig|71421.8.peg.1418"/>
<dbReference type="eggNOG" id="COG0583">
    <property type="taxonomic scope" value="Bacteria"/>
</dbReference>
<dbReference type="HOGENOM" id="CLU_039613_16_3_6"/>
<dbReference type="OrthoDB" id="8885940at2"/>
<dbReference type="PhylomeDB" id="P43011"/>
<dbReference type="BioCyc" id="HINF71421:G1GJ1-1389-MONOMER"/>
<dbReference type="Proteomes" id="UP000000579">
    <property type="component" value="Chromosome"/>
</dbReference>
<dbReference type="GO" id="GO:0003700">
    <property type="term" value="F:DNA-binding transcription factor activity"/>
    <property type="evidence" value="ECO:0000318"/>
    <property type="project" value="GO_Central"/>
</dbReference>
<dbReference type="GO" id="GO:0043565">
    <property type="term" value="F:sequence-specific DNA binding"/>
    <property type="evidence" value="ECO:0000318"/>
    <property type="project" value="GO_Central"/>
</dbReference>
<dbReference type="GO" id="GO:0006351">
    <property type="term" value="P:DNA-templated transcription"/>
    <property type="evidence" value="ECO:0000318"/>
    <property type="project" value="GO_Central"/>
</dbReference>
<dbReference type="CDD" id="cd08422">
    <property type="entry name" value="PBP2_CrgA_like"/>
    <property type="match status" value="1"/>
</dbReference>
<dbReference type="FunFam" id="1.10.10.10:FF:000001">
    <property type="entry name" value="LysR family transcriptional regulator"/>
    <property type="match status" value="1"/>
</dbReference>
<dbReference type="Gene3D" id="3.40.190.290">
    <property type="match status" value="1"/>
</dbReference>
<dbReference type="Gene3D" id="1.10.10.10">
    <property type="entry name" value="Winged helix-like DNA-binding domain superfamily/Winged helix DNA-binding domain"/>
    <property type="match status" value="1"/>
</dbReference>
<dbReference type="InterPro" id="IPR005119">
    <property type="entry name" value="LysR_subst-bd"/>
</dbReference>
<dbReference type="InterPro" id="IPR000847">
    <property type="entry name" value="Tscrpt_reg_HTH_LysR"/>
</dbReference>
<dbReference type="InterPro" id="IPR036388">
    <property type="entry name" value="WH-like_DNA-bd_sf"/>
</dbReference>
<dbReference type="InterPro" id="IPR036390">
    <property type="entry name" value="WH_DNA-bd_sf"/>
</dbReference>
<dbReference type="PANTHER" id="PTHR30537:SF5">
    <property type="entry name" value="HTH-TYPE TRANSCRIPTIONAL ACTIVATOR TTDR-RELATED"/>
    <property type="match status" value="1"/>
</dbReference>
<dbReference type="PANTHER" id="PTHR30537">
    <property type="entry name" value="HTH-TYPE TRANSCRIPTIONAL REGULATOR"/>
    <property type="match status" value="1"/>
</dbReference>
<dbReference type="Pfam" id="PF00126">
    <property type="entry name" value="HTH_1"/>
    <property type="match status" value="1"/>
</dbReference>
<dbReference type="Pfam" id="PF03466">
    <property type="entry name" value="LysR_substrate"/>
    <property type="match status" value="1"/>
</dbReference>
<dbReference type="SUPFAM" id="SSF53850">
    <property type="entry name" value="Periplasmic binding protein-like II"/>
    <property type="match status" value="1"/>
</dbReference>
<dbReference type="SUPFAM" id="SSF46785">
    <property type="entry name" value="Winged helix' DNA-binding domain"/>
    <property type="match status" value="1"/>
</dbReference>
<dbReference type="PROSITE" id="PS50931">
    <property type="entry name" value="HTH_LYSR"/>
    <property type="match status" value="1"/>
</dbReference>
<sequence>MDKLNAISIFCKVIETQSFTLAAKQQNISVAMASKLVSQLEEHLKTRLLQRTTRKIMPTEAGMMYYQRCQGILLDLDEADSSITQLTSSLQGNLLISVPRDFGLLFIAPNLPTFMAKHPHLHIEVEFNDKKIDLLSEGYDLALRIGYMEDSSLVSRKIGTTTVHFAASPNYLETNGIPQTPDDLEHHNGLLYKNAMNQVNWVGSRINQTQRFKIQSKVVSNSGFALLNMAKAGLGIANLPKFILGRAFEKGELIEILPEYKQQKLEIHVVYPNRRHLPIKVTGISLNF</sequence>
<evidence type="ECO:0000255" key="1">
    <source>
        <dbReference type="PROSITE-ProRule" id="PRU00253"/>
    </source>
</evidence>
<evidence type="ECO:0000305" key="2"/>
<name>Y1364_HAEIN</name>
<organism>
    <name type="scientific">Haemophilus influenzae (strain ATCC 51907 / DSM 11121 / KW20 / Rd)</name>
    <dbReference type="NCBI Taxonomy" id="71421"/>
    <lineage>
        <taxon>Bacteria</taxon>
        <taxon>Pseudomonadati</taxon>
        <taxon>Pseudomonadota</taxon>
        <taxon>Gammaproteobacteria</taxon>
        <taxon>Pasteurellales</taxon>
        <taxon>Pasteurellaceae</taxon>
        <taxon>Haemophilus</taxon>
    </lineage>
</organism>
<gene>
    <name type="ordered locus">HI_1364</name>
</gene>
<keyword id="KW-0238">DNA-binding</keyword>
<keyword id="KW-1185">Reference proteome</keyword>
<keyword id="KW-0804">Transcription</keyword>
<keyword id="KW-0805">Transcription regulation</keyword>